<gene>
    <name type="primary">LRFN3</name>
    <name type="synonym">SALM4</name>
</gene>
<evidence type="ECO:0000250" key="1"/>
<evidence type="ECO:0000255" key="2"/>
<evidence type="ECO:0000255" key="3">
    <source>
        <dbReference type="PROSITE-ProRule" id="PRU00114"/>
    </source>
</evidence>
<evidence type="ECO:0000255" key="4">
    <source>
        <dbReference type="PROSITE-ProRule" id="PRU00316"/>
    </source>
</evidence>
<evidence type="ECO:0000256" key="5">
    <source>
        <dbReference type="SAM" id="MobiDB-lite"/>
    </source>
</evidence>
<evidence type="ECO:0000305" key="6"/>
<accession>Q1RMS4</accession>
<dbReference type="EMBL" id="BC114740">
    <property type="protein sequence ID" value="AAI14741.1"/>
    <property type="molecule type" value="mRNA"/>
</dbReference>
<dbReference type="RefSeq" id="NP_001070427.1">
    <property type="nucleotide sequence ID" value="NM_001076959.1"/>
</dbReference>
<dbReference type="RefSeq" id="XP_005219090.1">
    <property type="nucleotide sequence ID" value="XM_005219033.5"/>
</dbReference>
<dbReference type="SMR" id="Q1RMS4"/>
<dbReference type="FunCoup" id="Q1RMS4">
    <property type="interactions" value="786"/>
</dbReference>
<dbReference type="STRING" id="9913.ENSBTAP00000068721"/>
<dbReference type="GlyCosmos" id="Q1RMS4">
    <property type="glycosylation" value="2 sites, No reported glycans"/>
</dbReference>
<dbReference type="GlyGen" id="Q1RMS4">
    <property type="glycosylation" value="2 sites"/>
</dbReference>
<dbReference type="PaxDb" id="9913-ENSBTAP00000000176"/>
<dbReference type="Ensembl" id="ENSBTAT00000000176.4">
    <property type="protein sequence ID" value="ENSBTAP00000000176.3"/>
    <property type="gene ID" value="ENSBTAG00000000153.5"/>
</dbReference>
<dbReference type="GeneID" id="767839"/>
<dbReference type="KEGG" id="bta:767839"/>
<dbReference type="CTD" id="79414"/>
<dbReference type="VEuPathDB" id="HostDB:ENSBTAG00000000153"/>
<dbReference type="VGNC" id="VGNC:30977">
    <property type="gene designation" value="LRFN3"/>
</dbReference>
<dbReference type="eggNOG" id="KOG0619">
    <property type="taxonomic scope" value="Eukaryota"/>
</dbReference>
<dbReference type="GeneTree" id="ENSGT00940000161203"/>
<dbReference type="HOGENOM" id="CLU_016998_1_0_1"/>
<dbReference type="InParanoid" id="Q1RMS4"/>
<dbReference type="OrthoDB" id="1394818at2759"/>
<dbReference type="TreeFam" id="TF350185"/>
<dbReference type="Reactome" id="R-BTA-8849932">
    <property type="pathway name" value="Synaptic adhesion-like molecules"/>
</dbReference>
<dbReference type="Proteomes" id="UP000009136">
    <property type="component" value="Chromosome 18"/>
</dbReference>
<dbReference type="Bgee" id="ENSBTAG00000000153">
    <property type="expression patterns" value="Expressed in vas deferens and 103 other cell types or tissues"/>
</dbReference>
<dbReference type="GO" id="GO:0030424">
    <property type="term" value="C:axon"/>
    <property type="evidence" value="ECO:0007669"/>
    <property type="project" value="UniProtKB-SubCell"/>
</dbReference>
<dbReference type="GO" id="GO:0009986">
    <property type="term" value="C:cell surface"/>
    <property type="evidence" value="ECO:0000318"/>
    <property type="project" value="GO_Central"/>
</dbReference>
<dbReference type="GO" id="GO:0030425">
    <property type="term" value="C:dendrite"/>
    <property type="evidence" value="ECO:0007669"/>
    <property type="project" value="UniProtKB-SubCell"/>
</dbReference>
<dbReference type="GO" id="GO:0045211">
    <property type="term" value="C:postsynaptic membrane"/>
    <property type="evidence" value="ECO:0007669"/>
    <property type="project" value="UniProtKB-SubCell"/>
</dbReference>
<dbReference type="GO" id="GO:0048787">
    <property type="term" value="C:presynaptic active zone membrane"/>
    <property type="evidence" value="ECO:0000318"/>
    <property type="project" value="GO_Central"/>
</dbReference>
<dbReference type="GO" id="GO:0007155">
    <property type="term" value="P:cell adhesion"/>
    <property type="evidence" value="ECO:0007669"/>
    <property type="project" value="UniProtKB-KW"/>
</dbReference>
<dbReference type="CDD" id="cd00063">
    <property type="entry name" value="FN3"/>
    <property type="match status" value="1"/>
</dbReference>
<dbReference type="FunFam" id="2.60.40.10:FF:000235">
    <property type="entry name" value="Leucine-rich repeat and fibronectin type III domain-containing 2"/>
    <property type="match status" value="1"/>
</dbReference>
<dbReference type="FunFam" id="2.60.40.10:FF:000091">
    <property type="entry name" value="Leucine-rich repeat and fibronectin type III domain-containing protein 1"/>
    <property type="match status" value="1"/>
</dbReference>
<dbReference type="FunFam" id="3.80.10.10:FF:000019">
    <property type="entry name" value="leucine-rich repeat and fibronectin type III domain-containing protein 1"/>
    <property type="match status" value="1"/>
</dbReference>
<dbReference type="FunFam" id="3.80.10.10:FF:000209">
    <property type="entry name" value="leucine-rich repeat and fibronectin type-III domain-containing protein 3"/>
    <property type="match status" value="1"/>
</dbReference>
<dbReference type="Gene3D" id="2.60.40.10">
    <property type="entry name" value="Immunoglobulins"/>
    <property type="match status" value="2"/>
</dbReference>
<dbReference type="Gene3D" id="3.80.10.10">
    <property type="entry name" value="Ribonuclease Inhibitor"/>
    <property type="match status" value="2"/>
</dbReference>
<dbReference type="InterPro" id="IPR000483">
    <property type="entry name" value="Cys-rich_flank_reg_C"/>
</dbReference>
<dbReference type="InterPro" id="IPR003961">
    <property type="entry name" value="FN3_dom"/>
</dbReference>
<dbReference type="InterPro" id="IPR036116">
    <property type="entry name" value="FN3_sf"/>
</dbReference>
<dbReference type="InterPro" id="IPR007110">
    <property type="entry name" value="Ig-like_dom"/>
</dbReference>
<dbReference type="InterPro" id="IPR036179">
    <property type="entry name" value="Ig-like_dom_sf"/>
</dbReference>
<dbReference type="InterPro" id="IPR013783">
    <property type="entry name" value="Ig-like_fold"/>
</dbReference>
<dbReference type="InterPro" id="IPR013098">
    <property type="entry name" value="Ig_I-set"/>
</dbReference>
<dbReference type="InterPro" id="IPR003599">
    <property type="entry name" value="Ig_sub"/>
</dbReference>
<dbReference type="InterPro" id="IPR003598">
    <property type="entry name" value="Ig_sub2"/>
</dbReference>
<dbReference type="InterPro" id="IPR001611">
    <property type="entry name" value="Leu-rich_rpt"/>
</dbReference>
<dbReference type="InterPro" id="IPR003591">
    <property type="entry name" value="Leu-rich_rpt_typical-subtyp"/>
</dbReference>
<dbReference type="InterPro" id="IPR050467">
    <property type="entry name" value="LRFN"/>
</dbReference>
<dbReference type="InterPro" id="IPR032675">
    <property type="entry name" value="LRR_dom_sf"/>
</dbReference>
<dbReference type="PANTHER" id="PTHR45842:SF5">
    <property type="entry name" value="LEUCINE-RICH REPEAT AND FIBRONECTIN TYPE-III DOMAIN-CONTAINING PROTEIN 3"/>
    <property type="match status" value="1"/>
</dbReference>
<dbReference type="PANTHER" id="PTHR45842">
    <property type="entry name" value="SYNAPTIC ADHESION-LIKE MOLECULE SALM"/>
    <property type="match status" value="1"/>
</dbReference>
<dbReference type="Pfam" id="PF00041">
    <property type="entry name" value="fn3"/>
    <property type="match status" value="1"/>
</dbReference>
<dbReference type="Pfam" id="PF07679">
    <property type="entry name" value="I-set"/>
    <property type="match status" value="1"/>
</dbReference>
<dbReference type="Pfam" id="PF13855">
    <property type="entry name" value="LRR_8"/>
    <property type="match status" value="2"/>
</dbReference>
<dbReference type="SMART" id="SM00409">
    <property type="entry name" value="IG"/>
    <property type="match status" value="1"/>
</dbReference>
<dbReference type="SMART" id="SM00408">
    <property type="entry name" value="IGc2"/>
    <property type="match status" value="1"/>
</dbReference>
<dbReference type="SMART" id="SM00369">
    <property type="entry name" value="LRR_TYP"/>
    <property type="match status" value="6"/>
</dbReference>
<dbReference type="SMART" id="SM00082">
    <property type="entry name" value="LRRCT"/>
    <property type="match status" value="1"/>
</dbReference>
<dbReference type="SUPFAM" id="SSF49265">
    <property type="entry name" value="Fibronectin type III"/>
    <property type="match status" value="1"/>
</dbReference>
<dbReference type="SUPFAM" id="SSF48726">
    <property type="entry name" value="Immunoglobulin"/>
    <property type="match status" value="1"/>
</dbReference>
<dbReference type="SUPFAM" id="SSF52058">
    <property type="entry name" value="L domain-like"/>
    <property type="match status" value="1"/>
</dbReference>
<dbReference type="PROSITE" id="PS50853">
    <property type="entry name" value="FN3"/>
    <property type="match status" value="1"/>
</dbReference>
<dbReference type="PROSITE" id="PS50835">
    <property type="entry name" value="IG_LIKE"/>
    <property type="match status" value="1"/>
</dbReference>
<reference key="1">
    <citation type="journal article" date="2009" name="Science">
        <title>The genome sequence of taurine cattle: a window to ruminant biology and evolution.</title>
        <authorList>
            <consortium name="The bovine genome sequencing and analysis consortium"/>
        </authorList>
    </citation>
    <scope>NUCLEOTIDE SEQUENCE [LARGE SCALE GENOMIC DNA]</scope>
    <source>
        <strain>Hereford</strain>
    </source>
</reference>
<proteinExistence type="evidence at transcript level"/>
<name>LRFN3_BOVIN</name>
<sequence>MAVLPLLLCLLPLAPASSPPQPASPSPCPRRCRCQTQSLPLSVLCPGAGLLFVPPSLDRRAAELRLADNFIATVRRRDLANMTGLLHLSLSRNTIRHVAAGAFSDLRALRALHLDGNRLTSLGEGQLRGLVNLRHLILSNNQLAALAAGALDDCAETLEDLDLSYNNLEQLPWEALGRLGNVNTLGLDHNLLASVPAGAFSRLHKLARLDMTSNRLTTIPPDPLFSRLPLLARPRGSPASALVLAFGGNPLHCNCELVWLRRLAREDDLEACASPPALGGRYFWAVGEEEFVCEPPVVTHRSPPLAVPAGRPAALRCRAVGDPEPRVRWVSPQGRLLGNSSRARAFPNGTLELLVTEPGDGGIFTCIAANAAGEATAAVELTVGPPPPPQLANSTSCDPPRDGEPDALTPPSAASASASAKAAEAGPPTDRGVQVTEHGATAALIQWPDQRPIPGIRMYQIQYNSSADDILVYRMIPAESSSFLLTDLASGRTYDLCVLAVYEDSATGLTATRPVGCNRFSTEPALRPCGAPHAPFLGGTMIIALGGVIVASVLVFIFVLLMRYKVHGGQPPGKTKASAPVSSVCSQTNGALGPMPAPPAPEPSAPRAHTVVQLDCEPWGPSHEPMGP</sequence>
<keyword id="KW-0130">Cell adhesion</keyword>
<keyword id="KW-1003">Cell membrane</keyword>
<keyword id="KW-0966">Cell projection</keyword>
<keyword id="KW-1015">Disulfide bond</keyword>
<keyword id="KW-0325">Glycoprotein</keyword>
<keyword id="KW-0393">Immunoglobulin domain</keyword>
<keyword id="KW-0433">Leucine-rich repeat</keyword>
<keyword id="KW-0472">Membrane</keyword>
<keyword id="KW-0628">Postsynaptic cell membrane</keyword>
<keyword id="KW-1185">Reference proteome</keyword>
<keyword id="KW-0677">Repeat</keyword>
<keyword id="KW-0732">Signal</keyword>
<keyword id="KW-0770">Synapse</keyword>
<keyword id="KW-0812">Transmembrane</keyword>
<keyword id="KW-1133">Transmembrane helix</keyword>
<feature type="signal peptide" evidence="2">
    <location>
        <begin position="1"/>
        <end position="16"/>
    </location>
</feature>
<feature type="chain" id="PRO_0000394521" description="Leucine-rich repeat and fibronectin type-III domain-containing protein 3">
    <location>
        <begin position="17"/>
        <end position="628"/>
    </location>
</feature>
<feature type="topological domain" description="Extracellular" evidence="2">
    <location>
        <begin position="17"/>
        <end position="540"/>
    </location>
</feature>
<feature type="transmembrane region" description="Helical" evidence="2">
    <location>
        <begin position="541"/>
        <end position="561"/>
    </location>
</feature>
<feature type="topological domain" description="Cytoplasmic" evidence="2">
    <location>
        <begin position="562"/>
        <end position="628"/>
    </location>
</feature>
<feature type="domain" description="LRRNT">
    <location>
        <begin position="19"/>
        <end position="59"/>
    </location>
</feature>
<feature type="repeat" description="LRR 1">
    <location>
        <begin position="60"/>
        <end position="83"/>
    </location>
</feature>
<feature type="repeat" description="LRR 2">
    <location>
        <begin position="84"/>
        <end position="105"/>
    </location>
</feature>
<feature type="repeat" description="LRR 3">
    <location>
        <begin position="108"/>
        <end position="129"/>
    </location>
</feature>
<feature type="repeat" description="LRR 4">
    <location>
        <begin position="132"/>
        <end position="153"/>
    </location>
</feature>
<feature type="repeat" description="LRR 5">
    <location>
        <begin position="157"/>
        <end position="178"/>
    </location>
</feature>
<feature type="repeat" description="LRR 6">
    <location>
        <begin position="181"/>
        <end position="202"/>
    </location>
</feature>
<feature type="repeat" description="LRR 7">
    <location>
        <begin position="205"/>
        <end position="226"/>
    </location>
</feature>
<feature type="domain" description="LRRCT">
    <location>
        <begin position="249"/>
        <end position="295"/>
    </location>
</feature>
<feature type="domain" description="Ig-like">
    <location>
        <begin position="295"/>
        <end position="382"/>
    </location>
</feature>
<feature type="domain" description="Fibronectin type-III" evidence="4">
    <location>
        <begin position="427"/>
        <end position="525"/>
    </location>
</feature>
<feature type="region of interest" description="Disordered" evidence="5">
    <location>
        <begin position="380"/>
        <end position="433"/>
    </location>
</feature>
<feature type="region of interest" description="Disordered" evidence="5">
    <location>
        <begin position="570"/>
        <end position="609"/>
    </location>
</feature>
<feature type="compositionally biased region" description="Low complexity" evidence="5">
    <location>
        <begin position="410"/>
        <end position="428"/>
    </location>
</feature>
<feature type="compositionally biased region" description="Polar residues" evidence="5">
    <location>
        <begin position="580"/>
        <end position="590"/>
    </location>
</feature>
<feature type="compositionally biased region" description="Pro residues" evidence="5">
    <location>
        <begin position="595"/>
        <end position="604"/>
    </location>
</feature>
<feature type="glycosylation site" description="N-linked (GlcNAc...) asparagine" evidence="2">
    <location>
        <position position="348"/>
    </location>
</feature>
<feature type="glycosylation site" description="N-linked (GlcNAc...) asparagine" evidence="2">
    <location>
        <position position="393"/>
    </location>
</feature>
<feature type="disulfide bond" evidence="3">
    <location>
        <begin position="317"/>
        <end position="366"/>
    </location>
</feature>
<protein>
    <recommendedName>
        <fullName>Leucine-rich repeat and fibronectin type-III domain-containing protein 3</fullName>
    </recommendedName>
    <alternativeName>
        <fullName>Synaptic adhesion-like molecule 4</fullName>
    </alternativeName>
</protein>
<organism>
    <name type="scientific">Bos taurus</name>
    <name type="common">Bovine</name>
    <dbReference type="NCBI Taxonomy" id="9913"/>
    <lineage>
        <taxon>Eukaryota</taxon>
        <taxon>Metazoa</taxon>
        <taxon>Chordata</taxon>
        <taxon>Craniata</taxon>
        <taxon>Vertebrata</taxon>
        <taxon>Euteleostomi</taxon>
        <taxon>Mammalia</taxon>
        <taxon>Eutheria</taxon>
        <taxon>Laurasiatheria</taxon>
        <taxon>Artiodactyla</taxon>
        <taxon>Ruminantia</taxon>
        <taxon>Pecora</taxon>
        <taxon>Bovidae</taxon>
        <taxon>Bovinae</taxon>
        <taxon>Bos</taxon>
    </lineage>
</organism>
<comment type="function">
    <text evidence="1">Cell adhesion molecule that mediates homophilic cell-cell adhesion in a Ca(2+)-independent manner. Promotes neurite outgrowth in hippocampal neurons (By similarity).</text>
</comment>
<comment type="subunit">
    <text evidence="1">Can form heteromeric complexes with LRFN1, LRFN2, LRFN4 and LRFN5. Able to form homomeric complexes across cell junctions, between adjacent cells. Does not interact with DLG4 (By similarity).</text>
</comment>
<comment type="subcellular location">
    <subcellularLocation>
        <location>Cell membrane</location>
        <topology>Single-pass type I membrane protein</topology>
    </subcellularLocation>
    <subcellularLocation>
        <location>Cell projection</location>
        <location>Axon</location>
    </subcellularLocation>
    <subcellularLocation>
        <location>Cell projection</location>
        <location>Dendrite</location>
    </subcellularLocation>
    <subcellularLocation>
        <location>Synapse</location>
    </subcellularLocation>
    <subcellularLocation>
        <location>Presynaptic cell membrane</location>
    </subcellularLocation>
    <subcellularLocation>
        <location evidence="1">Postsynaptic cell membrane</location>
    </subcellularLocation>
</comment>
<comment type="domain">
    <text>Lacks a cytoplasmic PDZ-binding domain, which has been implicated in function of related Lrfn proteins.</text>
</comment>
<comment type="PTM">
    <text evidence="1">N-glycosylated.</text>
</comment>
<comment type="similarity">
    <text evidence="6">Belongs to the LRFN family.</text>
</comment>